<gene>
    <name type="ordered locus">VV1_2562</name>
</gene>
<reference key="1">
    <citation type="submission" date="2002-12" db="EMBL/GenBank/DDBJ databases">
        <title>Complete genome sequence of Vibrio vulnificus CMCP6.</title>
        <authorList>
            <person name="Rhee J.H."/>
            <person name="Kim S.Y."/>
            <person name="Chung S.S."/>
            <person name="Kim J.J."/>
            <person name="Moon Y.H."/>
            <person name="Jeong H."/>
            <person name="Choy H.E."/>
        </authorList>
    </citation>
    <scope>NUCLEOTIDE SEQUENCE [LARGE SCALE GENOMIC DNA]</scope>
    <source>
        <strain>CMCP6</strain>
    </source>
</reference>
<dbReference type="EC" id="2.7.1.-" evidence="2"/>
<dbReference type="EMBL" id="AE016795">
    <property type="protein sequence ID" value="AAO10913.1"/>
    <property type="molecule type" value="Genomic_DNA"/>
</dbReference>
<dbReference type="RefSeq" id="WP_011080412.1">
    <property type="nucleotide sequence ID" value="NC_004459.3"/>
</dbReference>
<dbReference type="SMR" id="Q8D9N5"/>
<dbReference type="KEGG" id="vvu:VV1_2562"/>
<dbReference type="HOGENOM" id="CLU_036517_0_0_6"/>
<dbReference type="Proteomes" id="UP000002275">
    <property type="component" value="Chromosome 1"/>
</dbReference>
<dbReference type="GO" id="GO:0005524">
    <property type="term" value="F:ATP binding"/>
    <property type="evidence" value="ECO:0007669"/>
    <property type="project" value="UniProtKB-KW"/>
</dbReference>
<dbReference type="GO" id="GO:0016301">
    <property type="term" value="F:kinase activity"/>
    <property type="evidence" value="ECO:0007669"/>
    <property type="project" value="UniProtKB-KW"/>
</dbReference>
<dbReference type="Gene3D" id="3.90.1200.10">
    <property type="match status" value="1"/>
</dbReference>
<dbReference type="Gene3D" id="3.30.200.20">
    <property type="entry name" value="Phosphorylase Kinase, domain 1"/>
    <property type="match status" value="1"/>
</dbReference>
<dbReference type="InterPro" id="IPR016477">
    <property type="entry name" value="Fructo-/Ketosamine-3-kinase"/>
</dbReference>
<dbReference type="InterPro" id="IPR011009">
    <property type="entry name" value="Kinase-like_dom_sf"/>
</dbReference>
<dbReference type="PANTHER" id="PTHR12149">
    <property type="entry name" value="FRUCTOSAMINE 3 KINASE-RELATED PROTEIN"/>
    <property type="match status" value="1"/>
</dbReference>
<dbReference type="PANTHER" id="PTHR12149:SF8">
    <property type="entry name" value="PROTEIN-RIBULOSAMINE 3-KINASE"/>
    <property type="match status" value="1"/>
</dbReference>
<dbReference type="Pfam" id="PF03881">
    <property type="entry name" value="Fructosamin_kin"/>
    <property type="match status" value="1"/>
</dbReference>
<dbReference type="PIRSF" id="PIRSF006221">
    <property type="entry name" value="Ketosamine-3-kinase"/>
    <property type="match status" value="1"/>
</dbReference>
<dbReference type="SUPFAM" id="SSF56112">
    <property type="entry name" value="Protein kinase-like (PK-like)"/>
    <property type="match status" value="1"/>
</dbReference>
<feature type="chain" id="PRO_0000216350" description="Probable ketoamine kinase VV1_2562">
    <location>
        <begin position="1"/>
        <end position="288"/>
    </location>
</feature>
<feature type="active site" description="Proton acceptor" evidence="1">
    <location>
        <position position="195"/>
    </location>
</feature>
<feature type="binding site" evidence="3">
    <location>
        <begin position="92"/>
        <end position="94"/>
    </location>
    <ligand>
        <name>ATP</name>
        <dbReference type="ChEBI" id="CHEBI:30616"/>
    </ligand>
</feature>
<organism>
    <name type="scientific">Vibrio vulnificus (strain CMCP6)</name>
    <dbReference type="NCBI Taxonomy" id="216895"/>
    <lineage>
        <taxon>Bacteria</taxon>
        <taxon>Pseudomonadati</taxon>
        <taxon>Pseudomonadota</taxon>
        <taxon>Gammaproteobacteria</taxon>
        <taxon>Vibrionales</taxon>
        <taxon>Vibrionaceae</taxon>
        <taxon>Vibrio</taxon>
    </lineage>
</organism>
<evidence type="ECO:0000250" key="1">
    <source>
        <dbReference type="UniProtKB" id="P9WI99"/>
    </source>
</evidence>
<evidence type="ECO:0000250" key="2">
    <source>
        <dbReference type="UniProtKB" id="Q9H479"/>
    </source>
</evidence>
<evidence type="ECO:0000250" key="3">
    <source>
        <dbReference type="UniProtKB" id="Q9HA64"/>
    </source>
</evidence>
<evidence type="ECO:0000305" key="4"/>
<keyword id="KW-0067">ATP-binding</keyword>
<keyword id="KW-0418">Kinase</keyword>
<keyword id="KW-0547">Nucleotide-binding</keyword>
<keyword id="KW-0808">Transferase</keyword>
<proteinExistence type="inferred from homology"/>
<comment type="function">
    <text evidence="2">Ketoamine kinase that phosphorylates ketoamines on the third carbon of the sugar moiety to generate ketoamine 3-phosphate.</text>
</comment>
<comment type="similarity">
    <text evidence="4">Belongs to the fructosamine kinase family.</text>
</comment>
<protein>
    <recommendedName>
        <fullName>Probable ketoamine kinase VV1_2562</fullName>
        <ecNumber evidence="2">2.7.1.-</ecNumber>
    </recommendedName>
</protein>
<sequence>MWQAISQQLSETLMFSYDIVEKVHLSGGDINECYMISDGEQRYFVKINSKDFLSKFQVEAENLRLLRQTDSVTLPELVLIGNTKSNAFIILNFLPTKPLEDTENSYKFGQQLAYLHLWGEQKEYGCDQDNYLGATLQPNAWHKKWSTFFSEQRIGWQLQLLKEKGVTFGVIDEIVEVVARQLLNHNPRPSLIHGDLWHGNVALSAFGPICYDPACYWGDRECDIAMTELFGGFNAEFYRGYEDIAPLPFGYTQRKEIYNLYHILNHCNQFGGHYLEQAQKSIDKILSY</sequence>
<name>KT3K_VIBVU</name>
<accession>Q8D9N5</accession>